<feature type="chain" id="PRO_1000086168" description="Small ribosomal subunit protein uS3">
    <location>
        <begin position="1"/>
        <end position="209"/>
    </location>
</feature>
<feature type="domain" description="KH type-2" evidence="1">
    <location>
        <begin position="38"/>
        <end position="107"/>
    </location>
</feature>
<keyword id="KW-0687">Ribonucleoprotein</keyword>
<keyword id="KW-0689">Ribosomal protein</keyword>
<keyword id="KW-0694">RNA-binding</keyword>
<keyword id="KW-0699">rRNA-binding</keyword>
<name>RS3_THEM4</name>
<reference key="1">
    <citation type="submission" date="2007-05" db="EMBL/GenBank/DDBJ databases">
        <title>Complete sequence of Thermosipho melanesiensis BI429.</title>
        <authorList>
            <consortium name="US DOE Joint Genome Institute"/>
            <person name="Copeland A."/>
            <person name="Lucas S."/>
            <person name="Lapidus A."/>
            <person name="Barry K."/>
            <person name="Glavina del Rio T."/>
            <person name="Dalin E."/>
            <person name="Tice H."/>
            <person name="Pitluck S."/>
            <person name="Chertkov O."/>
            <person name="Brettin T."/>
            <person name="Bruce D."/>
            <person name="Detter J.C."/>
            <person name="Han C."/>
            <person name="Schmutz J."/>
            <person name="Larimer F."/>
            <person name="Land M."/>
            <person name="Hauser L."/>
            <person name="Kyrpides N."/>
            <person name="Mikhailova N."/>
            <person name="Nelson K."/>
            <person name="Gogarten J.P."/>
            <person name="Noll K."/>
            <person name="Richardson P."/>
        </authorList>
    </citation>
    <scope>NUCLEOTIDE SEQUENCE [LARGE SCALE GENOMIC DNA]</scope>
    <source>
        <strain>DSM 12029 / CIP 104789 / BI429</strain>
    </source>
</reference>
<dbReference type="EMBL" id="CP000716">
    <property type="protein sequence ID" value="ABR30820.1"/>
    <property type="molecule type" value="Genomic_DNA"/>
</dbReference>
<dbReference type="RefSeq" id="WP_012057181.1">
    <property type="nucleotide sequence ID" value="NC_009616.1"/>
</dbReference>
<dbReference type="SMR" id="A6LLL9"/>
<dbReference type="STRING" id="391009.Tmel_0959"/>
<dbReference type="KEGG" id="tme:Tmel_0959"/>
<dbReference type="eggNOG" id="COG0092">
    <property type="taxonomic scope" value="Bacteria"/>
</dbReference>
<dbReference type="HOGENOM" id="CLU_058591_0_2_0"/>
<dbReference type="OrthoDB" id="9806396at2"/>
<dbReference type="Proteomes" id="UP000001110">
    <property type="component" value="Chromosome"/>
</dbReference>
<dbReference type="GO" id="GO:0022627">
    <property type="term" value="C:cytosolic small ribosomal subunit"/>
    <property type="evidence" value="ECO:0007669"/>
    <property type="project" value="TreeGrafter"/>
</dbReference>
<dbReference type="GO" id="GO:0003729">
    <property type="term" value="F:mRNA binding"/>
    <property type="evidence" value="ECO:0007669"/>
    <property type="project" value="UniProtKB-UniRule"/>
</dbReference>
<dbReference type="GO" id="GO:0019843">
    <property type="term" value="F:rRNA binding"/>
    <property type="evidence" value="ECO:0007669"/>
    <property type="project" value="UniProtKB-UniRule"/>
</dbReference>
<dbReference type="GO" id="GO:0003735">
    <property type="term" value="F:structural constituent of ribosome"/>
    <property type="evidence" value="ECO:0007669"/>
    <property type="project" value="InterPro"/>
</dbReference>
<dbReference type="GO" id="GO:0006412">
    <property type="term" value="P:translation"/>
    <property type="evidence" value="ECO:0007669"/>
    <property type="project" value="UniProtKB-UniRule"/>
</dbReference>
<dbReference type="CDD" id="cd02412">
    <property type="entry name" value="KH-II_30S_S3"/>
    <property type="match status" value="1"/>
</dbReference>
<dbReference type="FunFam" id="3.30.300.20:FF:000001">
    <property type="entry name" value="30S ribosomal protein S3"/>
    <property type="match status" value="1"/>
</dbReference>
<dbReference type="Gene3D" id="3.30.300.20">
    <property type="match status" value="1"/>
</dbReference>
<dbReference type="Gene3D" id="3.30.1140.32">
    <property type="entry name" value="Ribosomal protein S3, C-terminal domain"/>
    <property type="match status" value="1"/>
</dbReference>
<dbReference type="HAMAP" id="MF_01309_B">
    <property type="entry name" value="Ribosomal_uS3_B"/>
    <property type="match status" value="1"/>
</dbReference>
<dbReference type="InterPro" id="IPR004087">
    <property type="entry name" value="KH_dom"/>
</dbReference>
<dbReference type="InterPro" id="IPR015946">
    <property type="entry name" value="KH_dom-like_a/b"/>
</dbReference>
<dbReference type="InterPro" id="IPR004044">
    <property type="entry name" value="KH_dom_type_2"/>
</dbReference>
<dbReference type="InterPro" id="IPR009019">
    <property type="entry name" value="KH_sf_prok-type"/>
</dbReference>
<dbReference type="InterPro" id="IPR036419">
    <property type="entry name" value="Ribosomal_S3_C_sf"/>
</dbReference>
<dbReference type="InterPro" id="IPR005704">
    <property type="entry name" value="Ribosomal_uS3_bac-typ"/>
</dbReference>
<dbReference type="InterPro" id="IPR001351">
    <property type="entry name" value="Ribosomal_uS3_C"/>
</dbReference>
<dbReference type="InterPro" id="IPR018280">
    <property type="entry name" value="Ribosomal_uS3_CS"/>
</dbReference>
<dbReference type="NCBIfam" id="TIGR01009">
    <property type="entry name" value="rpsC_bact"/>
    <property type="match status" value="1"/>
</dbReference>
<dbReference type="PANTHER" id="PTHR11760">
    <property type="entry name" value="30S/40S RIBOSOMAL PROTEIN S3"/>
    <property type="match status" value="1"/>
</dbReference>
<dbReference type="PANTHER" id="PTHR11760:SF19">
    <property type="entry name" value="SMALL RIBOSOMAL SUBUNIT PROTEIN US3C"/>
    <property type="match status" value="1"/>
</dbReference>
<dbReference type="Pfam" id="PF07650">
    <property type="entry name" value="KH_2"/>
    <property type="match status" value="1"/>
</dbReference>
<dbReference type="Pfam" id="PF00189">
    <property type="entry name" value="Ribosomal_S3_C"/>
    <property type="match status" value="1"/>
</dbReference>
<dbReference type="SMART" id="SM00322">
    <property type="entry name" value="KH"/>
    <property type="match status" value="1"/>
</dbReference>
<dbReference type="SUPFAM" id="SSF54814">
    <property type="entry name" value="Prokaryotic type KH domain (KH-domain type II)"/>
    <property type="match status" value="1"/>
</dbReference>
<dbReference type="SUPFAM" id="SSF54821">
    <property type="entry name" value="Ribosomal protein S3 C-terminal domain"/>
    <property type="match status" value="1"/>
</dbReference>
<dbReference type="PROSITE" id="PS50823">
    <property type="entry name" value="KH_TYPE_2"/>
    <property type="match status" value="1"/>
</dbReference>
<dbReference type="PROSITE" id="PS00548">
    <property type="entry name" value="RIBOSOMAL_S3"/>
    <property type="match status" value="1"/>
</dbReference>
<evidence type="ECO:0000255" key="1">
    <source>
        <dbReference type="HAMAP-Rule" id="MF_01309"/>
    </source>
</evidence>
<evidence type="ECO:0000305" key="2"/>
<comment type="function">
    <text evidence="1">Binds the lower part of the 30S subunit head. Binds mRNA in the 70S ribosome, positioning it for translation.</text>
</comment>
<comment type="subunit">
    <text evidence="1">Part of the 30S ribosomal subunit. Forms a tight complex with proteins S10 and S14.</text>
</comment>
<comment type="similarity">
    <text evidence="1">Belongs to the universal ribosomal protein uS3 family.</text>
</comment>
<organism>
    <name type="scientific">Thermosipho melanesiensis (strain DSM 12029 / CIP 104789 / BI429)</name>
    <dbReference type="NCBI Taxonomy" id="391009"/>
    <lineage>
        <taxon>Bacteria</taxon>
        <taxon>Thermotogati</taxon>
        <taxon>Thermotogota</taxon>
        <taxon>Thermotogae</taxon>
        <taxon>Thermotogales</taxon>
        <taxon>Fervidobacteriaceae</taxon>
        <taxon>Thermosipho</taxon>
    </lineage>
</organism>
<sequence length="209" mass="23812">MGQKVHPRGFRLGITTDWQAKWFNEKNYKEYLLEDEEIRKVIKSKYAQAGISEIVIERPDSERVVAIVKTARPGIIIGKKGAEITALRKDLEEKFNRRFIVNVEEIKTPEVDAQLIAENVANRIEKRASYKVVMKRAIFNAMKKGAKGIKIMVSGRLAGAEIARTEWYLKGRLPLQTIRSIIDYGTARAETKYGTIGIKVWVYKGDADI</sequence>
<proteinExistence type="inferred from homology"/>
<accession>A6LLL9</accession>
<gene>
    <name evidence="1" type="primary">rpsC</name>
    <name type="ordered locus">Tmel_0959</name>
</gene>
<protein>
    <recommendedName>
        <fullName evidence="1">Small ribosomal subunit protein uS3</fullName>
    </recommendedName>
    <alternativeName>
        <fullName evidence="2">30S ribosomal protein S3</fullName>
    </alternativeName>
</protein>